<reference key="1">
    <citation type="journal article" date="2006" name="DNA Res.">
        <title>Genome sequence of the cat pathogen, Chlamydophila felis.</title>
        <authorList>
            <person name="Azuma Y."/>
            <person name="Hirakawa H."/>
            <person name="Yamashita A."/>
            <person name="Cai Y."/>
            <person name="Rahman M.A."/>
            <person name="Suzuki H."/>
            <person name="Mitaku S."/>
            <person name="Toh H."/>
            <person name="Goto S."/>
            <person name="Murakami T."/>
            <person name="Sugi K."/>
            <person name="Hayashi H."/>
            <person name="Fukushi H."/>
            <person name="Hattori M."/>
            <person name="Kuhara S."/>
            <person name="Shirai M."/>
        </authorList>
    </citation>
    <scope>NUCLEOTIDE SEQUENCE [LARGE SCALE GENOMIC DNA]</scope>
    <source>
        <strain>Fe/C-56</strain>
    </source>
</reference>
<gene>
    <name evidence="1" type="primary">dxr</name>
    <name type="ordered locus">CF0566</name>
</gene>
<organism>
    <name type="scientific">Chlamydia felis (strain Fe/C-56)</name>
    <name type="common">Chlamydophila felis</name>
    <dbReference type="NCBI Taxonomy" id="264202"/>
    <lineage>
        <taxon>Bacteria</taxon>
        <taxon>Pseudomonadati</taxon>
        <taxon>Chlamydiota</taxon>
        <taxon>Chlamydiia</taxon>
        <taxon>Chlamydiales</taxon>
        <taxon>Chlamydiaceae</taxon>
        <taxon>Chlamydia/Chlamydophila group</taxon>
        <taxon>Chlamydia</taxon>
    </lineage>
</organism>
<name>DXR_CHLFF</name>
<comment type="function">
    <text evidence="1">Catalyzes the NADPH-dependent rearrangement and reduction of 1-deoxy-D-xylulose-5-phosphate (DXP) to 2-C-methyl-D-erythritol 4-phosphate (MEP).</text>
</comment>
<comment type="catalytic activity">
    <reaction evidence="1">
        <text>2-C-methyl-D-erythritol 4-phosphate + NADP(+) = 1-deoxy-D-xylulose 5-phosphate + NADPH + H(+)</text>
        <dbReference type="Rhea" id="RHEA:13717"/>
        <dbReference type="ChEBI" id="CHEBI:15378"/>
        <dbReference type="ChEBI" id="CHEBI:57783"/>
        <dbReference type="ChEBI" id="CHEBI:57792"/>
        <dbReference type="ChEBI" id="CHEBI:58262"/>
        <dbReference type="ChEBI" id="CHEBI:58349"/>
        <dbReference type="EC" id="1.1.1.267"/>
    </reaction>
    <physiologicalReaction direction="right-to-left" evidence="1">
        <dbReference type="Rhea" id="RHEA:13719"/>
    </physiologicalReaction>
</comment>
<comment type="cofactor">
    <cofactor evidence="1">
        <name>Mg(2+)</name>
        <dbReference type="ChEBI" id="CHEBI:18420"/>
    </cofactor>
    <cofactor evidence="1">
        <name>Mn(2+)</name>
        <dbReference type="ChEBI" id="CHEBI:29035"/>
    </cofactor>
</comment>
<comment type="pathway">
    <text evidence="1">Isoprenoid biosynthesis; isopentenyl diphosphate biosynthesis via DXP pathway; isopentenyl diphosphate from 1-deoxy-D-xylulose 5-phosphate: step 1/6.</text>
</comment>
<comment type="similarity">
    <text evidence="1">Belongs to the DXR family.</text>
</comment>
<keyword id="KW-0414">Isoprene biosynthesis</keyword>
<keyword id="KW-0464">Manganese</keyword>
<keyword id="KW-0479">Metal-binding</keyword>
<keyword id="KW-0521">NADP</keyword>
<keyword id="KW-0560">Oxidoreductase</keyword>
<feature type="chain" id="PRO_1000020243" description="1-deoxy-D-xylulose 5-phosphate reductoisomerase">
    <location>
        <begin position="1"/>
        <end position="379"/>
    </location>
</feature>
<feature type="binding site" evidence="1">
    <location>
        <position position="10"/>
    </location>
    <ligand>
        <name>NADPH</name>
        <dbReference type="ChEBI" id="CHEBI:57783"/>
    </ligand>
</feature>
<feature type="binding site" evidence="1">
    <location>
        <position position="11"/>
    </location>
    <ligand>
        <name>NADPH</name>
        <dbReference type="ChEBI" id="CHEBI:57783"/>
    </ligand>
</feature>
<feature type="binding site" evidence="1">
    <location>
        <position position="12"/>
    </location>
    <ligand>
        <name>NADPH</name>
        <dbReference type="ChEBI" id="CHEBI:57783"/>
    </ligand>
</feature>
<feature type="binding site" evidence="1">
    <location>
        <position position="13"/>
    </location>
    <ligand>
        <name>NADPH</name>
        <dbReference type="ChEBI" id="CHEBI:57783"/>
    </ligand>
</feature>
<feature type="binding site" evidence="1">
    <location>
        <position position="39"/>
    </location>
    <ligand>
        <name>NADPH</name>
        <dbReference type="ChEBI" id="CHEBI:57783"/>
    </ligand>
</feature>
<feature type="binding site" evidence="1">
    <location>
        <position position="121"/>
    </location>
    <ligand>
        <name>NADPH</name>
        <dbReference type="ChEBI" id="CHEBI:57783"/>
    </ligand>
</feature>
<feature type="binding site" evidence="1">
    <location>
        <position position="122"/>
    </location>
    <ligand>
        <name>1-deoxy-D-xylulose 5-phosphate</name>
        <dbReference type="ChEBI" id="CHEBI:57792"/>
    </ligand>
</feature>
<feature type="binding site" evidence="1">
    <location>
        <position position="123"/>
    </location>
    <ligand>
        <name>NADPH</name>
        <dbReference type="ChEBI" id="CHEBI:57783"/>
    </ligand>
</feature>
<feature type="binding site" evidence="1">
    <location>
        <position position="147"/>
    </location>
    <ligand>
        <name>Mn(2+)</name>
        <dbReference type="ChEBI" id="CHEBI:29035"/>
    </ligand>
</feature>
<feature type="binding site" evidence="1">
    <location>
        <position position="148"/>
    </location>
    <ligand>
        <name>1-deoxy-D-xylulose 5-phosphate</name>
        <dbReference type="ChEBI" id="CHEBI:57792"/>
    </ligand>
</feature>
<feature type="binding site" evidence="1">
    <location>
        <position position="149"/>
    </location>
    <ligand>
        <name>1-deoxy-D-xylulose 5-phosphate</name>
        <dbReference type="ChEBI" id="CHEBI:57792"/>
    </ligand>
</feature>
<feature type="binding site" evidence="1">
    <location>
        <position position="149"/>
    </location>
    <ligand>
        <name>Mn(2+)</name>
        <dbReference type="ChEBI" id="CHEBI:29035"/>
    </ligand>
</feature>
<feature type="binding site" evidence="1">
    <location>
        <position position="173"/>
    </location>
    <ligand>
        <name>1-deoxy-D-xylulose 5-phosphate</name>
        <dbReference type="ChEBI" id="CHEBI:57792"/>
    </ligand>
</feature>
<feature type="binding site" evidence="1">
    <location>
        <position position="196"/>
    </location>
    <ligand>
        <name>1-deoxy-D-xylulose 5-phosphate</name>
        <dbReference type="ChEBI" id="CHEBI:57792"/>
    </ligand>
</feature>
<feature type="binding site" evidence="1">
    <location>
        <position position="202"/>
    </location>
    <ligand>
        <name>NADPH</name>
        <dbReference type="ChEBI" id="CHEBI:57783"/>
    </ligand>
</feature>
<feature type="binding site" evidence="1">
    <location>
        <position position="209"/>
    </location>
    <ligand>
        <name>1-deoxy-D-xylulose 5-phosphate</name>
        <dbReference type="ChEBI" id="CHEBI:57792"/>
    </ligand>
</feature>
<feature type="binding site" evidence="1">
    <location>
        <position position="214"/>
    </location>
    <ligand>
        <name>1-deoxy-D-xylulose 5-phosphate</name>
        <dbReference type="ChEBI" id="CHEBI:57792"/>
    </ligand>
</feature>
<feature type="binding site" evidence="1">
    <location>
        <position position="215"/>
    </location>
    <ligand>
        <name>1-deoxy-D-xylulose 5-phosphate</name>
        <dbReference type="ChEBI" id="CHEBI:57792"/>
    </ligand>
</feature>
<feature type="binding site" evidence="1">
    <location>
        <position position="218"/>
    </location>
    <ligand>
        <name>1-deoxy-D-xylulose 5-phosphate</name>
        <dbReference type="ChEBI" id="CHEBI:57792"/>
    </ligand>
</feature>
<feature type="binding site" evidence="1">
    <location>
        <position position="218"/>
    </location>
    <ligand>
        <name>Mn(2+)</name>
        <dbReference type="ChEBI" id="CHEBI:29035"/>
    </ligand>
</feature>
<protein>
    <recommendedName>
        <fullName evidence="1">1-deoxy-D-xylulose 5-phosphate reductoisomerase</fullName>
        <shortName evidence="1">DXP reductoisomerase</shortName>
        <ecNumber evidence="1">1.1.1.267</ecNumber>
    </recommendedName>
    <alternativeName>
        <fullName evidence="1">1-deoxyxylulose-5-phosphate reductoisomerase</fullName>
    </alternativeName>
    <alternativeName>
        <fullName evidence="1">2-C-methyl-D-erythritol 4-phosphate synthase</fullName>
    </alternativeName>
</protein>
<evidence type="ECO:0000255" key="1">
    <source>
        <dbReference type="HAMAP-Rule" id="MF_00183"/>
    </source>
</evidence>
<proteinExistence type="inferred from homology"/>
<accession>Q254F0</accession>
<dbReference type="EC" id="1.1.1.267" evidence="1"/>
<dbReference type="EMBL" id="AP006861">
    <property type="protein sequence ID" value="BAE81338.1"/>
    <property type="molecule type" value="Genomic_DNA"/>
</dbReference>
<dbReference type="RefSeq" id="WP_011458118.1">
    <property type="nucleotide sequence ID" value="NC_007899.1"/>
</dbReference>
<dbReference type="SMR" id="Q254F0"/>
<dbReference type="STRING" id="264202.CF0566"/>
<dbReference type="KEGG" id="cfe:CF0566"/>
<dbReference type="eggNOG" id="COG0743">
    <property type="taxonomic scope" value="Bacteria"/>
</dbReference>
<dbReference type="HOGENOM" id="CLU_035714_4_0_0"/>
<dbReference type="OrthoDB" id="9806546at2"/>
<dbReference type="UniPathway" id="UPA00056">
    <property type="reaction ID" value="UER00092"/>
</dbReference>
<dbReference type="Proteomes" id="UP000001260">
    <property type="component" value="Chromosome"/>
</dbReference>
<dbReference type="GO" id="GO:0030604">
    <property type="term" value="F:1-deoxy-D-xylulose-5-phosphate reductoisomerase activity"/>
    <property type="evidence" value="ECO:0007669"/>
    <property type="project" value="UniProtKB-UniRule"/>
</dbReference>
<dbReference type="GO" id="GO:0030145">
    <property type="term" value="F:manganese ion binding"/>
    <property type="evidence" value="ECO:0007669"/>
    <property type="project" value="TreeGrafter"/>
</dbReference>
<dbReference type="GO" id="GO:0070402">
    <property type="term" value="F:NADPH binding"/>
    <property type="evidence" value="ECO:0007669"/>
    <property type="project" value="InterPro"/>
</dbReference>
<dbReference type="GO" id="GO:0051484">
    <property type="term" value="P:isopentenyl diphosphate biosynthetic process, methylerythritol 4-phosphate pathway involved in terpenoid biosynthetic process"/>
    <property type="evidence" value="ECO:0007669"/>
    <property type="project" value="TreeGrafter"/>
</dbReference>
<dbReference type="FunFam" id="3.40.50.720:FF:000045">
    <property type="entry name" value="1-deoxy-D-xylulose 5-phosphate reductoisomerase"/>
    <property type="match status" value="1"/>
</dbReference>
<dbReference type="Gene3D" id="1.10.1740.10">
    <property type="match status" value="1"/>
</dbReference>
<dbReference type="Gene3D" id="3.40.50.720">
    <property type="entry name" value="NAD(P)-binding Rossmann-like Domain"/>
    <property type="match status" value="1"/>
</dbReference>
<dbReference type="HAMAP" id="MF_00183">
    <property type="entry name" value="DXP_reductoisom"/>
    <property type="match status" value="1"/>
</dbReference>
<dbReference type="InterPro" id="IPR003821">
    <property type="entry name" value="DXP_reductoisomerase"/>
</dbReference>
<dbReference type="InterPro" id="IPR013644">
    <property type="entry name" value="DXP_reductoisomerase_C"/>
</dbReference>
<dbReference type="InterPro" id="IPR013512">
    <property type="entry name" value="DXP_reductoisomerase_N"/>
</dbReference>
<dbReference type="InterPro" id="IPR026877">
    <property type="entry name" value="DXPR_C"/>
</dbReference>
<dbReference type="InterPro" id="IPR036169">
    <property type="entry name" value="DXPR_C_sf"/>
</dbReference>
<dbReference type="InterPro" id="IPR036291">
    <property type="entry name" value="NAD(P)-bd_dom_sf"/>
</dbReference>
<dbReference type="NCBIfam" id="TIGR00243">
    <property type="entry name" value="Dxr"/>
    <property type="match status" value="1"/>
</dbReference>
<dbReference type="PANTHER" id="PTHR30525">
    <property type="entry name" value="1-DEOXY-D-XYLULOSE 5-PHOSPHATE REDUCTOISOMERASE"/>
    <property type="match status" value="1"/>
</dbReference>
<dbReference type="PANTHER" id="PTHR30525:SF0">
    <property type="entry name" value="1-DEOXY-D-XYLULOSE 5-PHOSPHATE REDUCTOISOMERASE, CHLOROPLASTIC"/>
    <property type="match status" value="1"/>
</dbReference>
<dbReference type="Pfam" id="PF08436">
    <property type="entry name" value="DXP_redisom_C"/>
    <property type="match status" value="1"/>
</dbReference>
<dbReference type="Pfam" id="PF02670">
    <property type="entry name" value="DXP_reductoisom"/>
    <property type="match status" value="1"/>
</dbReference>
<dbReference type="Pfam" id="PF13288">
    <property type="entry name" value="DXPR_C"/>
    <property type="match status" value="1"/>
</dbReference>
<dbReference type="PIRSF" id="PIRSF006205">
    <property type="entry name" value="Dxp_reductismrs"/>
    <property type="match status" value="1"/>
</dbReference>
<dbReference type="SUPFAM" id="SSF69055">
    <property type="entry name" value="1-deoxy-D-xylulose-5-phosphate reductoisomerase, C-terminal domain"/>
    <property type="match status" value="1"/>
</dbReference>
<dbReference type="SUPFAM" id="SSF55347">
    <property type="entry name" value="Glyceraldehyde-3-phosphate dehydrogenase-like, C-terminal domain"/>
    <property type="match status" value="1"/>
</dbReference>
<dbReference type="SUPFAM" id="SSF51735">
    <property type="entry name" value="NAD(P)-binding Rossmann-fold domains"/>
    <property type="match status" value="1"/>
</dbReference>
<sequence>MKHLSIFGSTGSIGQQTLKIVRSLPHLFNVVALASYGNNKDLFIEQIREFSPSIVSVYDEQLYFEIRKEFPEIQAFLREEGLMAAATAEEIDMVVAASSGVVALPAIIEAMKSGKVLALANKEVLVSAGEIIKEFAKQYQTEIFPVDSEHNALYQCLEGRNALEVKKLLLTASGGPLLHKTKEELAHVTVQDVLKHPIWHMGAKITVDSSTLVNKGLEIIEAYWLFGLENAEIDAVIHPQSLIHGMVEFLDGTVLSVMNPPNMLFPIQHVLTTPKRYPAPHKGINFSIKQTLEFFPIDEERFPSIGLARQVLKNKGSSGPFFNAANEVLVQRFLAEEIAWCDILDKLTRLMENYRVFACTSLEDVLAVDEEARALAQEI</sequence>